<gene>
    <name evidence="1" type="primary">purM</name>
    <name type="ordered locus">swp_1818</name>
</gene>
<feature type="chain" id="PRO_1000148297" description="Phosphoribosylformylglycinamidine cyclo-ligase">
    <location>
        <begin position="1"/>
        <end position="346"/>
    </location>
</feature>
<protein>
    <recommendedName>
        <fullName evidence="1">Phosphoribosylformylglycinamidine cyclo-ligase</fullName>
        <ecNumber evidence="1">6.3.3.1</ecNumber>
    </recommendedName>
    <alternativeName>
        <fullName evidence="1">AIR synthase</fullName>
    </alternativeName>
    <alternativeName>
        <fullName evidence="1">AIRS</fullName>
    </alternativeName>
    <alternativeName>
        <fullName evidence="1">Phosphoribosyl-aminoimidazole synthetase</fullName>
    </alternativeName>
</protein>
<sequence>MSTPTTPLSYKDAGVDIDAGNALVNNIKSAVKRTRRPEVMGNLGGFGALCELPTKYKHPVLVSGTDGVGTKLRLAIDYKKHDNVGVDLVAMCSNDLIVSGAEPLFFLDYYATGKLDVEVATAVVKGIAEGCVQSGCALIGGETAEMPGMYEGDDYDLAGFCVGVAEKEEIIDGTKVQDGDALIALASSGPHSNGFSLIRKVLEVSKADPEQELAGKPLIDHLLEPTKIYVKSLLKLIEEHDVHAMSHITGGGFWENIPRVLPEDCKAVVKSDSWQWPVVFNWLMEKGNISEFEMYRTFNCGVGMVVALPADKVESALNLLNAEGEKAWLIGDIAKRSGDEEQVEIL</sequence>
<proteinExistence type="inferred from homology"/>
<evidence type="ECO:0000255" key="1">
    <source>
        <dbReference type="HAMAP-Rule" id="MF_00741"/>
    </source>
</evidence>
<accession>B8CN80</accession>
<organism>
    <name type="scientific">Shewanella piezotolerans (strain WP3 / JCM 13877)</name>
    <dbReference type="NCBI Taxonomy" id="225849"/>
    <lineage>
        <taxon>Bacteria</taxon>
        <taxon>Pseudomonadati</taxon>
        <taxon>Pseudomonadota</taxon>
        <taxon>Gammaproteobacteria</taxon>
        <taxon>Alteromonadales</taxon>
        <taxon>Shewanellaceae</taxon>
        <taxon>Shewanella</taxon>
    </lineage>
</organism>
<dbReference type="EC" id="6.3.3.1" evidence="1"/>
<dbReference type="EMBL" id="CP000472">
    <property type="protein sequence ID" value="ACJ28582.1"/>
    <property type="molecule type" value="Genomic_DNA"/>
</dbReference>
<dbReference type="RefSeq" id="WP_020911960.1">
    <property type="nucleotide sequence ID" value="NC_011566.1"/>
</dbReference>
<dbReference type="SMR" id="B8CN80"/>
<dbReference type="STRING" id="225849.swp_1818"/>
<dbReference type="KEGG" id="swp:swp_1818"/>
<dbReference type="eggNOG" id="COG0150">
    <property type="taxonomic scope" value="Bacteria"/>
</dbReference>
<dbReference type="HOGENOM" id="CLU_047116_0_0_6"/>
<dbReference type="OrthoDB" id="9777881at2"/>
<dbReference type="UniPathway" id="UPA00074">
    <property type="reaction ID" value="UER00129"/>
</dbReference>
<dbReference type="Proteomes" id="UP000000753">
    <property type="component" value="Chromosome"/>
</dbReference>
<dbReference type="GO" id="GO:0005829">
    <property type="term" value="C:cytosol"/>
    <property type="evidence" value="ECO:0007669"/>
    <property type="project" value="TreeGrafter"/>
</dbReference>
<dbReference type="GO" id="GO:0005524">
    <property type="term" value="F:ATP binding"/>
    <property type="evidence" value="ECO:0007669"/>
    <property type="project" value="UniProtKB-KW"/>
</dbReference>
<dbReference type="GO" id="GO:0004637">
    <property type="term" value="F:phosphoribosylamine-glycine ligase activity"/>
    <property type="evidence" value="ECO:0007669"/>
    <property type="project" value="TreeGrafter"/>
</dbReference>
<dbReference type="GO" id="GO:0004641">
    <property type="term" value="F:phosphoribosylformylglycinamidine cyclo-ligase activity"/>
    <property type="evidence" value="ECO:0007669"/>
    <property type="project" value="UniProtKB-UniRule"/>
</dbReference>
<dbReference type="GO" id="GO:0006189">
    <property type="term" value="P:'de novo' IMP biosynthetic process"/>
    <property type="evidence" value="ECO:0007669"/>
    <property type="project" value="UniProtKB-UniRule"/>
</dbReference>
<dbReference type="GO" id="GO:0046084">
    <property type="term" value="P:adenine biosynthetic process"/>
    <property type="evidence" value="ECO:0007669"/>
    <property type="project" value="TreeGrafter"/>
</dbReference>
<dbReference type="CDD" id="cd02196">
    <property type="entry name" value="PurM"/>
    <property type="match status" value="1"/>
</dbReference>
<dbReference type="FunFam" id="3.30.1330.10:FF:000001">
    <property type="entry name" value="Phosphoribosylformylglycinamidine cyclo-ligase"/>
    <property type="match status" value="1"/>
</dbReference>
<dbReference type="FunFam" id="3.90.650.10:FF:000001">
    <property type="entry name" value="Phosphoribosylformylglycinamidine cyclo-ligase"/>
    <property type="match status" value="1"/>
</dbReference>
<dbReference type="Gene3D" id="3.90.650.10">
    <property type="entry name" value="PurM-like C-terminal domain"/>
    <property type="match status" value="1"/>
</dbReference>
<dbReference type="Gene3D" id="3.30.1330.10">
    <property type="entry name" value="PurM-like, N-terminal domain"/>
    <property type="match status" value="1"/>
</dbReference>
<dbReference type="HAMAP" id="MF_00741">
    <property type="entry name" value="AIRS"/>
    <property type="match status" value="1"/>
</dbReference>
<dbReference type="InterPro" id="IPR010918">
    <property type="entry name" value="PurM-like_C_dom"/>
</dbReference>
<dbReference type="InterPro" id="IPR036676">
    <property type="entry name" value="PurM-like_C_sf"/>
</dbReference>
<dbReference type="InterPro" id="IPR016188">
    <property type="entry name" value="PurM-like_N"/>
</dbReference>
<dbReference type="InterPro" id="IPR036921">
    <property type="entry name" value="PurM-like_N_sf"/>
</dbReference>
<dbReference type="InterPro" id="IPR004733">
    <property type="entry name" value="PurM_cligase"/>
</dbReference>
<dbReference type="NCBIfam" id="TIGR00878">
    <property type="entry name" value="purM"/>
    <property type="match status" value="1"/>
</dbReference>
<dbReference type="PANTHER" id="PTHR10520:SF12">
    <property type="entry name" value="TRIFUNCTIONAL PURINE BIOSYNTHETIC PROTEIN ADENOSINE-3"/>
    <property type="match status" value="1"/>
</dbReference>
<dbReference type="PANTHER" id="PTHR10520">
    <property type="entry name" value="TRIFUNCTIONAL PURINE BIOSYNTHETIC PROTEIN ADENOSINE-3-RELATED"/>
    <property type="match status" value="1"/>
</dbReference>
<dbReference type="Pfam" id="PF00586">
    <property type="entry name" value="AIRS"/>
    <property type="match status" value="1"/>
</dbReference>
<dbReference type="Pfam" id="PF02769">
    <property type="entry name" value="AIRS_C"/>
    <property type="match status" value="1"/>
</dbReference>
<dbReference type="SUPFAM" id="SSF56042">
    <property type="entry name" value="PurM C-terminal domain-like"/>
    <property type="match status" value="1"/>
</dbReference>
<dbReference type="SUPFAM" id="SSF55326">
    <property type="entry name" value="PurM N-terminal domain-like"/>
    <property type="match status" value="1"/>
</dbReference>
<comment type="catalytic activity">
    <reaction evidence="1">
        <text>2-formamido-N(1)-(5-O-phospho-beta-D-ribosyl)acetamidine + ATP = 5-amino-1-(5-phospho-beta-D-ribosyl)imidazole + ADP + phosphate + H(+)</text>
        <dbReference type="Rhea" id="RHEA:23032"/>
        <dbReference type="ChEBI" id="CHEBI:15378"/>
        <dbReference type="ChEBI" id="CHEBI:30616"/>
        <dbReference type="ChEBI" id="CHEBI:43474"/>
        <dbReference type="ChEBI" id="CHEBI:137981"/>
        <dbReference type="ChEBI" id="CHEBI:147287"/>
        <dbReference type="ChEBI" id="CHEBI:456216"/>
        <dbReference type="EC" id="6.3.3.1"/>
    </reaction>
</comment>
<comment type="pathway">
    <text evidence="1">Purine metabolism; IMP biosynthesis via de novo pathway; 5-amino-1-(5-phospho-D-ribosyl)imidazole from N(2)-formyl-N(1)-(5-phospho-D-ribosyl)glycinamide: step 2/2.</text>
</comment>
<comment type="subcellular location">
    <subcellularLocation>
        <location evidence="1">Cytoplasm</location>
    </subcellularLocation>
</comment>
<comment type="similarity">
    <text evidence="1">Belongs to the AIR synthase family.</text>
</comment>
<keyword id="KW-0067">ATP-binding</keyword>
<keyword id="KW-0963">Cytoplasm</keyword>
<keyword id="KW-0436">Ligase</keyword>
<keyword id="KW-0547">Nucleotide-binding</keyword>
<keyword id="KW-0658">Purine biosynthesis</keyword>
<name>PUR5_SHEPW</name>
<reference key="1">
    <citation type="journal article" date="2008" name="PLoS ONE">
        <title>Environmental adaptation: genomic analysis of the piezotolerant and psychrotolerant deep-sea iron reducing bacterium Shewanella piezotolerans WP3.</title>
        <authorList>
            <person name="Wang F."/>
            <person name="Wang J."/>
            <person name="Jian H."/>
            <person name="Zhang B."/>
            <person name="Li S."/>
            <person name="Wang F."/>
            <person name="Zeng X."/>
            <person name="Gao L."/>
            <person name="Bartlett D.H."/>
            <person name="Yu J."/>
            <person name="Hu S."/>
            <person name="Xiao X."/>
        </authorList>
    </citation>
    <scope>NUCLEOTIDE SEQUENCE [LARGE SCALE GENOMIC DNA]</scope>
    <source>
        <strain>WP3 / JCM 13877</strain>
    </source>
</reference>